<protein>
    <recommendedName>
        <fullName evidence="1">Bifunctional glutamine synthetase adenylyltransferase/adenylyl-removing enzyme</fullName>
    </recommendedName>
    <alternativeName>
        <fullName evidence="1">ATP:glutamine synthetase adenylyltransferase</fullName>
    </alternativeName>
    <alternativeName>
        <fullName evidence="1">ATase</fullName>
    </alternativeName>
    <domain>
        <recommendedName>
            <fullName evidence="1">Glutamine synthetase adenylyl-L-tyrosine phosphorylase</fullName>
            <ecNumber evidence="1">2.7.7.89</ecNumber>
        </recommendedName>
        <alternativeName>
            <fullName evidence="1">Adenylyl removase</fullName>
            <shortName evidence="1">AR</shortName>
            <shortName evidence="1">AT-N</shortName>
        </alternativeName>
    </domain>
    <domain>
        <recommendedName>
            <fullName evidence="1">Glutamine synthetase adenylyl transferase</fullName>
            <ecNumber evidence="1">2.7.7.42</ecNumber>
        </recommendedName>
        <alternativeName>
            <fullName evidence="1">Adenylyl transferase</fullName>
            <shortName evidence="1">AT</shortName>
            <shortName evidence="1">AT-C</shortName>
        </alternativeName>
    </domain>
</protein>
<dbReference type="EC" id="2.7.7.89" evidence="1"/>
<dbReference type="EC" id="2.7.7.42" evidence="1"/>
<dbReference type="EMBL" id="BX248358">
    <property type="protein sequence ID" value="CAE50199.1"/>
    <property type="molecule type" value="Genomic_DNA"/>
</dbReference>
<dbReference type="RefSeq" id="WP_010935241.1">
    <property type="nucleotide sequence ID" value="NC_002935.2"/>
</dbReference>
<dbReference type="SMR" id="Q6NG61"/>
<dbReference type="STRING" id="257309.DIP1670"/>
<dbReference type="KEGG" id="cdi:DIP1670"/>
<dbReference type="HOGENOM" id="CLU_006233_1_0_11"/>
<dbReference type="Proteomes" id="UP000002198">
    <property type="component" value="Chromosome"/>
</dbReference>
<dbReference type="GO" id="GO:0005829">
    <property type="term" value="C:cytosol"/>
    <property type="evidence" value="ECO:0007669"/>
    <property type="project" value="TreeGrafter"/>
</dbReference>
<dbReference type="GO" id="GO:0008882">
    <property type="term" value="F:[glutamate-ammonia-ligase] adenylyltransferase activity"/>
    <property type="evidence" value="ECO:0007669"/>
    <property type="project" value="UniProtKB-UniRule"/>
</dbReference>
<dbReference type="GO" id="GO:0047388">
    <property type="term" value="F:[glutamine synthetase]-adenylyl-L-tyrosine phosphorylase activity"/>
    <property type="evidence" value="ECO:0007669"/>
    <property type="project" value="UniProtKB-EC"/>
</dbReference>
<dbReference type="GO" id="GO:0005524">
    <property type="term" value="F:ATP binding"/>
    <property type="evidence" value="ECO:0007669"/>
    <property type="project" value="UniProtKB-UniRule"/>
</dbReference>
<dbReference type="GO" id="GO:0000287">
    <property type="term" value="F:magnesium ion binding"/>
    <property type="evidence" value="ECO:0007669"/>
    <property type="project" value="UniProtKB-UniRule"/>
</dbReference>
<dbReference type="GO" id="GO:0000820">
    <property type="term" value="P:regulation of glutamine family amino acid metabolic process"/>
    <property type="evidence" value="ECO:0007669"/>
    <property type="project" value="UniProtKB-UniRule"/>
</dbReference>
<dbReference type="CDD" id="cd05401">
    <property type="entry name" value="NT_GlnE_GlnD_like"/>
    <property type="match status" value="2"/>
</dbReference>
<dbReference type="Gene3D" id="3.30.460.10">
    <property type="entry name" value="Beta Polymerase, domain 2"/>
    <property type="match status" value="2"/>
</dbReference>
<dbReference type="Gene3D" id="1.20.120.330">
    <property type="entry name" value="Nucleotidyltransferases domain 2"/>
    <property type="match status" value="2"/>
</dbReference>
<dbReference type="HAMAP" id="MF_00802">
    <property type="entry name" value="GlnE"/>
    <property type="match status" value="1"/>
</dbReference>
<dbReference type="InterPro" id="IPR023057">
    <property type="entry name" value="GlnE"/>
</dbReference>
<dbReference type="InterPro" id="IPR005190">
    <property type="entry name" value="GlnE_rpt_dom"/>
</dbReference>
<dbReference type="InterPro" id="IPR043519">
    <property type="entry name" value="NT_sf"/>
</dbReference>
<dbReference type="InterPro" id="IPR013546">
    <property type="entry name" value="PII_UdlTrfase/GS_AdlTrfase"/>
</dbReference>
<dbReference type="NCBIfam" id="NF010707">
    <property type="entry name" value="PRK14109.1"/>
    <property type="match status" value="1"/>
</dbReference>
<dbReference type="PANTHER" id="PTHR30621:SF0">
    <property type="entry name" value="BIFUNCTIONAL GLUTAMINE SYNTHETASE ADENYLYLTRANSFERASE_ADENYLYL-REMOVING ENZYME"/>
    <property type="match status" value="1"/>
</dbReference>
<dbReference type="PANTHER" id="PTHR30621">
    <property type="entry name" value="GLUTAMINE SYNTHETASE ADENYLYLTRANSFERASE"/>
    <property type="match status" value="1"/>
</dbReference>
<dbReference type="Pfam" id="PF08335">
    <property type="entry name" value="GlnD_UR_UTase"/>
    <property type="match status" value="2"/>
</dbReference>
<dbReference type="Pfam" id="PF03710">
    <property type="entry name" value="GlnE"/>
    <property type="match status" value="2"/>
</dbReference>
<dbReference type="SUPFAM" id="SSF81301">
    <property type="entry name" value="Nucleotidyltransferase"/>
    <property type="match status" value="2"/>
</dbReference>
<dbReference type="SUPFAM" id="SSF81593">
    <property type="entry name" value="Nucleotidyltransferase substrate binding subunit/domain"/>
    <property type="match status" value="2"/>
</dbReference>
<gene>
    <name evidence="1" type="primary">glnE</name>
    <name type="ordered locus">DIP1670</name>
</gene>
<organism>
    <name type="scientific">Corynebacterium diphtheriae (strain ATCC 700971 / NCTC 13129 / Biotype gravis)</name>
    <dbReference type="NCBI Taxonomy" id="257309"/>
    <lineage>
        <taxon>Bacteria</taxon>
        <taxon>Bacillati</taxon>
        <taxon>Actinomycetota</taxon>
        <taxon>Actinomycetes</taxon>
        <taxon>Mycobacteriales</taxon>
        <taxon>Corynebacteriaceae</taxon>
        <taxon>Corynebacterium</taxon>
    </lineage>
</organism>
<evidence type="ECO:0000255" key="1">
    <source>
        <dbReference type="HAMAP-Rule" id="MF_00802"/>
    </source>
</evidence>
<evidence type="ECO:0000256" key="2">
    <source>
        <dbReference type="SAM" id="MobiDB-lite"/>
    </source>
</evidence>
<sequence length="1054" mass="116477">MRKTLPSIGALGFSNTNAEKDLCCLGWYSNDPDTVVDAPEQAAEILWHLSGTADPDLALNTIIRLMEALGEQKGQLHNALRTDPELRVKLFSLLGASTALGDHLVAHPHTWPELQRPMPTRQEMFRLMLGSVGAARASFSSESQQPQGSDSDSEFSFGADLSADDTANTDLSTPGTYRAEITGERAEVALKTTYRSLLLRIAAADLAGTYPEDIHRTGLPEVPFVTVTKALADLADAALTAALAVAVAHVYPEGEVDTHLAVMAMGKCGAQELNYISDVDVIFVAEPVTPKAIRLAGEFIRIGCACFFEVDAALRPEGKHGVLVRTLDSHVAYYKRWAETWEFQALLKHRPMTGYMPLGQAYSEKLQPMVWEASQRESFVDNVQRMRRRVLENVPAKLKNLELKLGEGGLRDVEFAVQLLQLVHGRSDESLRTLSTIDALNALIEGGYVGREDGAELIRAYEFLRLLEHRLQLQKVKRTHTMPEATKTKQLRWLARAAGFKTSKLASATDEMNAMLKTSRLHISSLHRKLFYRPLLDSVVNISVGTLKLSPAAAKLQLAALGYVFPDRAMDHLHALAAGGSRKAKIQAMLLPTLMEWLSETAEPDAGLLNYRKLSDAAYDRTWFLRMLRDEGVVGQRLMRILGNSPYTADLIISAPDIVKQLGDGATRPKLLETSEDRVTKSIVAAAARHDDPDVAIAVARSLRRAELARIASADLLQMLSVQQVCRRLSYVWDAVLEAGLQAEIRASLIGSTGDKNSVPPARIAVIGMGRLGGSELGYGSDADVMFVCEPTEGVSDEAAVKWAIGVCDSMRSRLAKPSGDPPLDVDLGLRPEGRSGAVVRTLESYKQYYERWGEVWEIQALLRADFIAGDQELGARFLEMIEPLRYPEAGVSQKVIREVRRMKARVDNERLPRGADRNTHTKLGRGALTDVEWTVQLLTMMHAHEFQDLHNPSTLDSLDVIEKHAVIEPEKVEVLRQAWLTATRARNAIVLVRGKRVDQLPQQGTQLAAVAGAAGWEPSDSQQYLDHYLKVTRRARQVVDEVFWGVDSIEHDY</sequence>
<reference key="1">
    <citation type="journal article" date="2003" name="Nucleic Acids Res.">
        <title>The complete genome sequence and analysis of Corynebacterium diphtheriae NCTC13129.</title>
        <authorList>
            <person name="Cerdeno-Tarraga A.-M."/>
            <person name="Efstratiou A."/>
            <person name="Dover L.G."/>
            <person name="Holden M.T.G."/>
            <person name="Pallen M.J."/>
            <person name="Bentley S.D."/>
            <person name="Besra G.S."/>
            <person name="Churcher C.M."/>
            <person name="James K.D."/>
            <person name="De Zoysa A."/>
            <person name="Chillingworth T."/>
            <person name="Cronin A."/>
            <person name="Dowd L."/>
            <person name="Feltwell T."/>
            <person name="Hamlin N."/>
            <person name="Holroyd S."/>
            <person name="Jagels K."/>
            <person name="Moule S."/>
            <person name="Quail M.A."/>
            <person name="Rabbinowitsch E."/>
            <person name="Rutherford K.M."/>
            <person name="Thomson N.R."/>
            <person name="Unwin L."/>
            <person name="Whitehead S."/>
            <person name="Barrell B.G."/>
            <person name="Parkhill J."/>
        </authorList>
    </citation>
    <scope>NUCLEOTIDE SEQUENCE [LARGE SCALE GENOMIC DNA]</scope>
    <source>
        <strain>ATCC 700971 / NCTC 13129 / Biotype gravis</strain>
    </source>
</reference>
<proteinExistence type="inferred from homology"/>
<keyword id="KW-0067">ATP-binding</keyword>
<keyword id="KW-0460">Magnesium</keyword>
<keyword id="KW-0511">Multifunctional enzyme</keyword>
<keyword id="KW-0547">Nucleotide-binding</keyword>
<keyword id="KW-0548">Nucleotidyltransferase</keyword>
<keyword id="KW-1185">Reference proteome</keyword>
<keyword id="KW-0808">Transferase</keyword>
<name>GLNE_CORDI</name>
<feature type="chain" id="PRO_0000209241" description="Bifunctional glutamine synthetase adenylyltransferase/adenylyl-removing enzyme">
    <location>
        <begin position="1"/>
        <end position="1054"/>
    </location>
</feature>
<feature type="region of interest" description="Adenylyl removase" evidence="1">
    <location>
        <begin position="1"/>
        <end position="535"/>
    </location>
</feature>
<feature type="region of interest" description="Disordered" evidence="2">
    <location>
        <begin position="138"/>
        <end position="175"/>
    </location>
</feature>
<feature type="region of interest" description="Adenylyl transferase" evidence="1">
    <location>
        <begin position="541"/>
        <end position="1054"/>
    </location>
</feature>
<feature type="compositionally biased region" description="Polar residues" evidence="2">
    <location>
        <begin position="138"/>
        <end position="150"/>
    </location>
</feature>
<feature type="compositionally biased region" description="Polar residues" evidence="2">
    <location>
        <begin position="165"/>
        <end position="175"/>
    </location>
</feature>
<comment type="function">
    <text evidence="1">Involved in the regulation of glutamine synthetase GlnA, a key enzyme in the process to assimilate ammonia. When cellular nitrogen levels are high, the C-terminal adenylyl transferase (AT) inactivates GlnA by covalent transfer of an adenylyl group from ATP to specific tyrosine residue of GlnA, thus reducing its activity. Conversely, when nitrogen levels are low, the N-terminal adenylyl removase (AR) activates GlnA by removing the adenylyl group by phosphorolysis, increasing its activity. The regulatory region of GlnE binds the signal transduction protein PII (GlnB) which indicates the nitrogen status of the cell.</text>
</comment>
<comment type="catalytic activity">
    <reaction evidence="1">
        <text>[glutamine synthetase]-O(4)-(5'-adenylyl)-L-tyrosine + phosphate = [glutamine synthetase]-L-tyrosine + ADP</text>
        <dbReference type="Rhea" id="RHEA:43716"/>
        <dbReference type="Rhea" id="RHEA-COMP:10660"/>
        <dbReference type="Rhea" id="RHEA-COMP:10661"/>
        <dbReference type="ChEBI" id="CHEBI:43474"/>
        <dbReference type="ChEBI" id="CHEBI:46858"/>
        <dbReference type="ChEBI" id="CHEBI:83624"/>
        <dbReference type="ChEBI" id="CHEBI:456216"/>
        <dbReference type="EC" id="2.7.7.89"/>
    </reaction>
</comment>
<comment type="catalytic activity">
    <reaction evidence="1">
        <text>[glutamine synthetase]-L-tyrosine + ATP = [glutamine synthetase]-O(4)-(5'-adenylyl)-L-tyrosine + diphosphate</text>
        <dbReference type="Rhea" id="RHEA:18589"/>
        <dbReference type="Rhea" id="RHEA-COMP:10660"/>
        <dbReference type="Rhea" id="RHEA-COMP:10661"/>
        <dbReference type="ChEBI" id="CHEBI:30616"/>
        <dbReference type="ChEBI" id="CHEBI:33019"/>
        <dbReference type="ChEBI" id="CHEBI:46858"/>
        <dbReference type="ChEBI" id="CHEBI:83624"/>
        <dbReference type="EC" id="2.7.7.42"/>
    </reaction>
</comment>
<comment type="cofactor">
    <cofactor evidence="1">
        <name>Mg(2+)</name>
        <dbReference type="ChEBI" id="CHEBI:18420"/>
    </cofactor>
</comment>
<comment type="similarity">
    <text evidence="1">Belongs to the GlnE family.</text>
</comment>
<accession>Q6NG61</accession>